<reference key="1">
    <citation type="submission" date="2003-12" db="EMBL/GenBank/DDBJ databases">
        <title>Involvement of IL-15/IL-15Ra in guinea pig skin delayed-type hypersensitivity reaction.</title>
        <authorList>
            <person name="Ohtani M."/>
            <person name="Watanabe N."/>
        </authorList>
    </citation>
    <scope>NUCLEOTIDE SEQUENCE [MRNA]</scope>
    <source>
        <strain>Hartley</strain>
    </source>
</reference>
<keyword id="KW-0202">Cytokine</keyword>
<keyword id="KW-1015">Disulfide bond</keyword>
<keyword id="KW-0325">Glycoprotein</keyword>
<keyword id="KW-1185">Reference proteome</keyword>
<keyword id="KW-0964">Secreted</keyword>
<keyword id="KW-0732">Signal</keyword>
<gene>
    <name type="primary">IL15</name>
</gene>
<proteinExistence type="evidence at transcript level"/>
<name>IL15_CAVPO</name>
<feature type="signal peptide" evidence="4">
    <location>
        <begin position="1"/>
        <end position="29"/>
    </location>
</feature>
<feature type="propeptide" id="PRO_0000358327" evidence="4">
    <location>
        <begin position="30"/>
        <end position="48"/>
    </location>
</feature>
<feature type="chain" id="PRO_5000051007" description="Interleukin-15">
    <location>
        <begin position="49"/>
        <end position="162"/>
    </location>
</feature>
<feature type="glycosylation site" description="N-linked (GlcNAc...) asparagine" evidence="4">
    <location>
        <position position="119"/>
    </location>
</feature>
<feature type="glycosylation site" description="N-linked (GlcNAc...) asparagine" evidence="4">
    <location>
        <position position="127"/>
    </location>
</feature>
<feature type="disulfide bond" evidence="1">
    <location>
        <begin position="83"/>
        <end position="133"/>
    </location>
</feature>
<feature type="disulfide bond" evidence="1">
    <location>
        <begin position="90"/>
        <end position="136"/>
    </location>
</feature>
<sequence>MRISKPSLRSTSIQCYLCFLLNSHLITEAGIHVFVWGCISAGLPKTEASWHDVIYDLKRIENLIQSIHIDATLYTESDVHPNCKITAMKCFLLELRVILHESRNEDIHETITNLIILANSSLNSNGNVTESGCKECEELEEKSIAEFLQSFVHIVQMFINTS</sequence>
<comment type="function">
    <text evidence="2 3">Cytokine that plays a major role in the development of inflammatory and protective immune responses to microbial invaders and parasites by modulating immune cells of both the innate and adaptive immune systems. Stimulates the proliferation of natural killer cells, T-cells and B-cells and promotes the secretion of several cytokines. In monocytes, induces the production of IL8 and monocyte chemotactic protein 1/CCL2, two chemokines that attract neutrophils and monocytes respectively to sites of infection. Unlike most cytokines, which are secreted in soluble form, IL15 is expressed in association with its high affinity IL15RA on the surface of IL15-producing cells and delivers signals to target cells that express IL2RB and IL2RG receptor subunits. Binding to its receptor triggers the phosphorylation of JAK1 and JAK3 and the recruitment and subsequent phosphorylation of signal transducer and activator of transcription-3/STAT3 and STAT5 (By similarity). In mast cells, induces the rapid tyrosine phosphorylation of STAT6 and thereby controls mast cell survival and release of cytokines such as IL4 (By similarity).</text>
</comment>
<comment type="subcellular location">
    <subcellularLocation>
        <location evidence="1">Secreted</location>
    </subcellularLocation>
</comment>
<comment type="similarity">
    <text evidence="5">Belongs to the IL-15/IL-21 family.</text>
</comment>
<organism>
    <name type="scientific">Cavia porcellus</name>
    <name type="common">Guinea pig</name>
    <dbReference type="NCBI Taxonomy" id="10141"/>
    <lineage>
        <taxon>Eukaryota</taxon>
        <taxon>Metazoa</taxon>
        <taxon>Chordata</taxon>
        <taxon>Craniata</taxon>
        <taxon>Vertebrata</taxon>
        <taxon>Euteleostomi</taxon>
        <taxon>Mammalia</taxon>
        <taxon>Eutheria</taxon>
        <taxon>Euarchontoglires</taxon>
        <taxon>Glires</taxon>
        <taxon>Rodentia</taxon>
        <taxon>Hystricomorpha</taxon>
        <taxon>Caviidae</taxon>
        <taxon>Cavia</taxon>
    </lineage>
</organism>
<accession>Q75SZ9</accession>
<protein>
    <recommendedName>
        <fullName>Interleukin-15</fullName>
        <shortName>IL-15</shortName>
    </recommendedName>
</protein>
<dbReference type="EMBL" id="AB128160">
    <property type="protein sequence ID" value="BAD04908.1"/>
    <property type="molecule type" value="mRNA"/>
</dbReference>
<dbReference type="RefSeq" id="NP_001166300.1">
    <property type="nucleotide sequence ID" value="NM_001172829.1"/>
</dbReference>
<dbReference type="RefSeq" id="XP_013015503.1">
    <property type="nucleotide sequence ID" value="XM_013160049.1"/>
</dbReference>
<dbReference type="SMR" id="Q75SZ9"/>
<dbReference type="FunCoup" id="Q75SZ9">
    <property type="interactions" value="732"/>
</dbReference>
<dbReference type="STRING" id="10141.ENSCPOP00000007401"/>
<dbReference type="GlyCosmos" id="Q75SZ9">
    <property type="glycosylation" value="2 sites, No reported glycans"/>
</dbReference>
<dbReference type="Ensembl" id="ENSCPOT00000008307.3">
    <property type="protein sequence ID" value="ENSCPOP00000007401.2"/>
    <property type="gene ID" value="ENSCPOG00000008232.4"/>
</dbReference>
<dbReference type="GeneID" id="100379533"/>
<dbReference type="KEGG" id="cpoc:100379533"/>
<dbReference type="CTD" id="3600"/>
<dbReference type="VEuPathDB" id="HostDB:ENSCPOG00000008232"/>
<dbReference type="eggNOG" id="ENOG502SCMF">
    <property type="taxonomic scope" value="Eukaryota"/>
</dbReference>
<dbReference type="GeneTree" id="ENSGT00390000016264"/>
<dbReference type="HOGENOM" id="CLU_135111_0_0_1"/>
<dbReference type="InParanoid" id="Q75SZ9"/>
<dbReference type="OMA" id="FVWGCIS"/>
<dbReference type="OrthoDB" id="8905762at2759"/>
<dbReference type="TreeFam" id="TF336199"/>
<dbReference type="Proteomes" id="UP000005447">
    <property type="component" value="Unassembled WGS sequence"/>
</dbReference>
<dbReference type="Bgee" id="ENSCPOG00000008232">
    <property type="expression patterns" value="Expressed in adult mammalian kidney and 12 other cell types or tissues"/>
</dbReference>
<dbReference type="GO" id="GO:0005829">
    <property type="term" value="C:cytosol"/>
    <property type="evidence" value="ECO:0007669"/>
    <property type="project" value="Ensembl"/>
</dbReference>
<dbReference type="GO" id="GO:0005615">
    <property type="term" value="C:extracellular space"/>
    <property type="evidence" value="ECO:0007669"/>
    <property type="project" value="UniProtKB-KW"/>
</dbReference>
<dbReference type="GO" id="GO:0016607">
    <property type="term" value="C:nuclear speck"/>
    <property type="evidence" value="ECO:0007669"/>
    <property type="project" value="Ensembl"/>
</dbReference>
<dbReference type="GO" id="GO:0005125">
    <property type="term" value="F:cytokine activity"/>
    <property type="evidence" value="ECO:0007669"/>
    <property type="project" value="UniProtKB-KW"/>
</dbReference>
<dbReference type="GO" id="GO:0005126">
    <property type="term" value="F:cytokine receptor binding"/>
    <property type="evidence" value="ECO:0007669"/>
    <property type="project" value="InterPro"/>
</dbReference>
<dbReference type="GO" id="GO:0048469">
    <property type="term" value="P:cell maturation"/>
    <property type="evidence" value="ECO:0007669"/>
    <property type="project" value="Ensembl"/>
</dbReference>
<dbReference type="GO" id="GO:0045062">
    <property type="term" value="P:extrathymic T cell selection"/>
    <property type="evidence" value="ECO:0007669"/>
    <property type="project" value="Ensembl"/>
</dbReference>
<dbReference type="GO" id="GO:0006955">
    <property type="term" value="P:immune response"/>
    <property type="evidence" value="ECO:0007669"/>
    <property type="project" value="InterPro"/>
</dbReference>
<dbReference type="GO" id="GO:0035723">
    <property type="term" value="P:interleukin-15-mediated signaling pathway"/>
    <property type="evidence" value="ECO:0000250"/>
    <property type="project" value="UniProtKB"/>
</dbReference>
<dbReference type="GO" id="GO:0048535">
    <property type="term" value="P:lymph node development"/>
    <property type="evidence" value="ECO:0007669"/>
    <property type="project" value="Ensembl"/>
</dbReference>
<dbReference type="GO" id="GO:0030225">
    <property type="term" value="P:macrophage differentiation"/>
    <property type="evidence" value="ECO:0007669"/>
    <property type="project" value="Ensembl"/>
</dbReference>
<dbReference type="GO" id="GO:0001779">
    <property type="term" value="P:natural killer cell differentiation"/>
    <property type="evidence" value="ECO:0007669"/>
    <property type="project" value="Ensembl"/>
</dbReference>
<dbReference type="GO" id="GO:0001787">
    <property type="term" value="P:natural killer cell proliferation"/>
    <property type="evidence" value="ECO:0007669"/>
    <property type="project" value="Ensembl"/>
</dbReference>
<dbReference type="GO" id="GO:0120163">
    <property type="term" value="P:negative regulation of cold-induced thermogenesis"/>
    <property type="evidence" value="ECO:0007669"/>
    <property type="project" value="Ensembl"/>
</dbReference>
<dbReference type="GO" id="GO:0042119">
    <property type="term" value="P:neutrophil activation"/>
    <property type="evidence" value="ECO:0000250"/>
    <property type="project" value="UniProtKB"/>
</dbReference>
<dbReference type="GO" id="GO:0001866">
    <property type="term" value="P:NK T cell proliferation"/>
    <property type="evidence" value="ECO:0007669"/>
    <property type="project" value="Ensembl"/>
</dbReference>
<dbReference type="GO" id="GO:0050778">
    <property type="term" value="P:positive regulation of immune response"/>
    <property type="evidence" value="ECO:0007669"/>
    <property type="project" value="Ensembl"/>
</dbReference>
<dbReference type="GO" id="GO:0032740">
    <property type="term" value="P:positive regulation of interleukin-17 production"/>
    <property type="evidence" value="ECO:0007669"/>
    <property type="project" value="Ensembl"/>
</dbReference>
<dbReference type="GO" id="GO:0032825">
    <property type="term" value="P:positive regulation of natural killer cell differentiation"/>
    <property type="evidence" value="ECO:0007669"/>
    <property type="project" value="Ensembl"/>
</dbReference>
<dbReference type="GO" id="GO:0032819">
    <property type="term" value="P:positive regulation of natural killer cell proliferation"/>
    <property type="evidence" value="ECO:0007669"/>
    <property type="project" value="Ensembl"/>
</dbReference>
<dbReference type="GO" id="GO:0050731">
    <property type="term" value="P:positive regulation of peptidyl-tyrosine phosphorylation"/>
    <property type="evidence" value="ECO:0000250"/>
    <property type="project" value="UniProtKB"/>
</dbReference>
<dbReference type="GO" id="GO:0050766">
    <property type="term" value="P:positive regulation of phagocytosis"/>
    <property type="evidence" value="ECO:0000250"/>
    <property type="project" value="UniProtKB"/>
</dbReference>
<dbReference type="GO" id="GO:0042102">
    <property type="term" value="P:positive regulation of T cell proliferation"/>
    <property type="evidence" value="ECO:0007669"/>
    <property type="project" value="Ensembl"/>
</dbReference>
<dbReference type="GO" id="GO:0050691">
    <property type="term" value="P:regulation of defense response to virus by host"/>
    <property type="evidence" value="ECO:0007669"/>
    <property type="project" value="Ensembl"/>
</dbReference>
<dbReference type="GO" id="GO:0045580">
    <property type="term" value="P:regulation of T cell differentiation"/>
    <property type="evidence" value="ECO:0007669"/>
    <property type="project" value="Ensembl"/>
</dbReference>
<dbReference type="FunFam" id="1.20.1250.70:FF:000001">
    <property type="entry name" value="Interleukin"/>
    <property type="match status" value="1"/>
</dbReference>
<dbReference type="Gene3D" id="1.20.1250.70">
    <property type="entry name" value="Interleukin-15/Interleukin-21"/>
    <property type="match status" value="1"/>
</dbReference>
<dbReference type="InterPro" id="IPR009079">
    <property type="entry name" value="4_helix_cytokine-like_core"/>
</dbReference>
<dbReference type="InterPro" id="IPR020439">
    <property type="entry name" value="IL-15"/>
</dbReference>
<dbReference type="InterPro" id="IPR003443">
    <property type="entry name" value="IL-15/IL-21_fam"/>
</dbReference>
<dbReference type="InterPro" id="IPR020466">
    <property type="entry name" value="IL-15_mml"/>
</dbReference>
<dbReference type="PANTHER" id="PTHR14356:SF3">
    <property type="entry name" value="INTERLEUKIN-15"/>
    <property type="match status" value="1"/>
</dbReference>
<dbReference type="PANTHER" id="PTHR14356">
    <property type="entry name" value="INTERLEUKIN-15-RELATED"/>
    <property type="match status" value="1"/>
</dbReference>
<dbReference type="Pfam" id="PF02372">
    <property type="entry name" value="IL15"/>
    <property type="match status" value="1"/>
</dbReference>
<dbReference type="PRINTS" id="PR01947">
    <property type="entry name" value="INTLKN15MAML"/>
</dbReference>
<dbReference type="PRINTS" id="PR01930">
    <property type="entry name" value="INTRLEUKIN15"/>
</dbReference>
<dbReference type="SUPFAM" id="SSF47266">
    <property type="entry name" value="4-helical cytokines"/>
    <property type="match status" value="1"/>
</dbReference>
<evidence type="ECO:0000250" key="1"/>
<evidence type="ECO:0000250" key="2">
    <source>
        <dbReference type="UniProtKB" id="P40933"/>
    </source>
</evidence>
<evidence type="ECO:0000250" key="3">
    <source>
        <dbReference type="UniProtKB" id="P48346"/>
    </source>
</evidence>
<evidence type="ECO:0000255" key="4"/>
<evidence type="ECO:0000305" key="5"/>